<organism>
    <name type="scientific">Cyriopagopus hainanus</name>
    <name type="common">Chinese bird spider</name>
    <name type="synonym">Haplopelma hainanum</name>
    <dbReference type="NCBI Taxonomy" id="209901"/>
    <lineage>
        <taxon>Eukaryota</taxon>
        <taxon>Metazoa</taxon>
        <taxon>Ecdysozoa</taxon>
        <taxon>Arthropoda</taxon>
        <taxon>Chelicerata</taxon>
        <taxon>Arachnida</taxon>
        <taxon>Araneae</taxon>
        <taxon>Mygalomorphae</taxon>
        <taxon>Theraphosidae</taxon>
        <taxon>Haplopelma</taxon>
    </lineage>
</organism>
<keyword id="KW-0903">Direct protein sequencing</keyword>
<keyword id="KW-1015">Disulfide bond</keyword>
<keyword id="KW-0872">Ion channel impairing toxin</keyword>
<keyword id="KW-0960">Knottin</keyword>
<keyword id="KW-0964">Secreted</keyword>
<keyword id="KW-0732">Signal</keyword>
<keyword id="KW-0800">Toxin</keyword>
<reference key="1">
    <citation type="journal article" date="2010" name="J. Proteome Res.">
        <title>Molecular diversification of peptide toxins from the tarantula Haplopelma hainanum (Ornithoctonus hainana) venom based on transcriptomic, peptidomic, and genomic analyses.</title>
        <authorList>
            <person name="Tang X."/>
            <person name="Zhang Y."/>
            <person name="Hu W."/>
            <person name="Xu D."/>
            <person name="Tao H."/>
            <person name="Yang X."/>
            <person name="Li Y."/>
            <person name="Jiang L."/>
            <person name="Liang S."/>
        </authorList>
    </citation>
    <scope>NUCLEOTIDE SEQUENCE [LARGE SCALE GENOMIC DNA]</scope>
    <scope>PROTEIN SEQUENCE OF 53-85</scope>
    <scope>IDENTIFICATION BY MASS SPECTROMETRY</scope>
    <source>
        <tissue>Venom</tissue>
        <tissue>Venom gland</tissue>
    </source>
</reference>
<proteinExistence type="evidence at protein level"/>
<evidence type="ECO:0000250" key="1"/>
<evidence type="ECO:0000250" key="2">
    <source>
        <dbReference type="UniProtKB" id="B3FIS6"/>
    </source>
</evidence>
<evidence type="ECO:0000255" key="3"/>
<evidence type="ECO:0000269" key="4">
    <source>
    </source>
</evidence>
<evidence type="ECO:0000305" key="5"/>
<name>H8A16_CYRHA</name>
<accession>D2Y2M8</accession>
<feature type="signal peptide" evidence="3">
    <location>
        <begin position="1"/>
        <end position="24"/>
    </location>
</feature>
<feature type="propeptide" id="PRO_0000400609" evidence="4">
    <location>
        <begin position="25"/>
        <end position="52"/>
    </location>
</feature>
<feature type="peptide" id="PRO_0000400610" description="U3-theraphotoxin-Hhn1a 16">
    <location>
        <begin position="53"/>
        <end position="87"/>
    </location>
</feature>
<feature type="disulfide bond" evidence="2">
    <location>
        <begin position="54"/>
        <end position="67"/>
    </location>
</feature>
<feature type="disulfide bond" evidence="2">
    <location>
        <begin position="61"/>
        <end position="72"/>
    </location>
</feature>
<feature type="disulfide bond" evidence="2">
    <location>
        <begin position="66"/>
        <end position="79"/>
    </location>
</feature>
<dbReference type="EMBL" id="GU293105">
    <property type="protein sequence ID" value="ADB56921.1"/>
    <property type="molecule type" value="Genomic_DNA"/>
</dbReference>
<dbReference type="ArachnoServer" id="AS001657">
    <property type="toxin name" value="U3-theraphotoxin-Hhn1a"/>
</dbReference>
<dbReference type="GO" id="GO:0005576">
    <property type="term" value="C:extracellular region"/>
    <property type="evidence" value="ECO:0007669"/>
    <property type="project" value="UniProtKB-SubCell"/>
</dbReference>
<dbReference type="GO" id="GO:0008200">
    <property type="term" value="F:ion channel inhibitor activity"/>
    <property type="evidence" value="ECO:0007669"/>
    <property type="project" value="InterPro"/>
</dbReference>
<dbReference type="GO" id="GO:0090729">
    <property type="term" value="F:toxin activity"/>
    <property type="evidence" value="ECO:0007669"/>
    <property type="project" value="UniProtKB-KW"/>
</dbReference>
<dbReference type="InterPro" id="IPR011696">
    <property type="entry name" value="Huwentoxin-1"/>
</dbReference>
<dbReference type="InterPro" id="IPR013140">
    <property type="entry name" value="Huwentoxin_CS1"/>
</dbReference>
<dbReference type="Pfam" id="PF07740">
    <property type="entry name" value="Toxin_12"/>
    <property type="match status" value="1"/>
</dbReference>
<dbReference type="SUPFAM" id="SSF57059">
    <property type="entry name" value="omega toxin-like"/>
    <property type="match status" value="1"/>
</dbReference>
<dbReference type="PROSITE" id="PS60021">
    <property type="entry name" value="HWTX_1"/>
    <property type="match status" value="1"/>
</dbReference>
<protein>
    <recommendedName>
        <fullName>U3-theraphotoxin-Hhn1a 16</fullName>
        <shortName>U3-TRTX-Hhn1a</shortName>
    </recommendedName>
    <alternativeName>
        <fullName>Hainantoxin-VIII.16</fullName>
        <shortName>HNTX-VIII.16</shortName>
    </alternativeName>
    <alternativeName>
        <fullName>Peptide F4-27.90</fullName>
    </alternativeName>
</protein>
<sequence>MVNMKASMFLTFAGLVLLFVVCYASESEEKEFPKEMLSSIFAVDNDFKQGERDCAGYMRECKEKLCCSGYVCSSRWKWCVLPAPWRR</sequence>
<comment type="function">
    <text evidence="1">Ion channel inhibitor.</text>
</comment>
<comment type="subcellular location">
    <subcellularLocation>
        <location>Secreted</location>
    </subcellularLocation>
</comment>
<comment type="tissue specificity">
    <text>Expressed by the venom gland.</text>
</comment>
<comment type="domain">
    <text evidence="1">The presence of a 'disulfide through disulfide knot' structurally defines this protein as a knottin.</text>
</comment>
<comment type="similarity">
    <text evidence="5">Belongs to the neurotoxin 10 (Hwtx-1) family. 51 (Hntx-8) subfamily. Hntx-8 sub-subfamily.</text>
</comment>